<organism>
    <name type="scientific">Meleagris gallopavo</name>
    <name type="common">Wild turkey</name>
    <dbReference type="NCBI Taxonomy" id="9103"/>
    <lineage>
        <taxon>Eukaryota</taxon>
        <taxon>Metazoa</taxon>
        <taxon>Chordata</taxon>
        <taxon>Craniata</taxon>
        <taxon>Vertebrata</taxon>
        <taxon>Euteleostomi</taxon>
        <taxon>Archelosauria</taxon>
        <taxon>Archosauria</taxon>
        <taxon>Dinosauria</taxon>
        <taxon>Saurischia</taxon>
        <taxon>Theropoda</taxon>
        <taxon>Coelurosauria</taxon>
        <taxon>Aves</taxon>
        <taxon>Neognathae</taxon>
        <taxon>Galloanserae</taxon>
        <taxon>Galliformes</taxon>
        <taxon>Phasianidae</taxon>
        <taxon>Meleagridinae</taxon>
        <taxon>Meleagris</taxon>
    </lineage>
</organism>
<accession>O93361</accession>
<proteinExistence type="inferred from homology"/>
<keyword id="KW-1003">Cell membrane</keyword>
<keyword id="KW-1015">Disulfide bond</keyword>
<keyword id="KW-0297">G-protein coupled receptor</keyword>
<keyword id="KW-0325">Glycoprotein</keyword>
<keyword id="KW-0472">Membrane</keyword>
<keyword id="KW-0675">Receptor</keyword>
<keyword id="KW-1185">Reference proteome</keyword>
<keyword id="KW-0807">Transducer</keyword>
<keyword id="KW-0812">Transmembrane</keyword>
<keyword id="KW-1133">Transmembrane helix</keyword>
<sequence>MSMANFTAGRNSCTFQEEFKQVLLPLVYSVVFLLGLPLNAVVIGQIWLARKALTRTTIYMLNLATADLLYVCSLPLLIYNYTQKDYWPFGDFTCKFVRFQFYTNLHGSILFLTCISVQRYMGICHPLASWHKKKGKKLTWLVCAAVWFIVIAQCLPTFVFASTGTQRNRTVCYDLSPPDRSASYFPYGITLTITGFLLPFAAILACYCSMARILCQKDELIGLAVHKKKDKAVRMIIIVVIVFSISFFPFHLTKTIYLIVRSSPTLPCPTLQAFAIAYKCTRPFASMNSVLDPILFYFTQRKFRESTRYLLDKMSSKWRHDHCITYGS</sequence>
<evidence type="ECO:0000255" key="1"/>
<evidence type="ECO:0000255" key="2">
    <source>
        <dbReference type="PROSITE-ProRule" id="PRU00521"/>
    </source>
</evidence>
<name>P2RY3_MELGA</name>
<protein>
    <recommendedName>
        <fullName>P2Y purinoceptor 3</fullName>
        <shortName>P2Y3</shortName>
    </recommendedName>
    <alternativeName>
        <fullName>Nucleoside diphosphate receptor</fullName>
    </alternativeName>
</protein>
<comment type="function">
    <text>Receptor for extracellular UDP &gt; ADP = UTP. The activity of this receptor is mediated by G proteins which activate a phosphatidylinositol-calcium second messenger system.</text>
</comment>
<comment type="subcellular location">
    <subcellularLocation>
        <location>Cell membrane</location>
        <topology>Multi-pass membrane protein</topology>
    </subcellularLocation>
</comment>
<comment type="similarity">
    <text evidence="2">Belongs to the G-protein coupled receptor 1 family.</text>
</comment>
<gene>
    <name type="primary">P2RY3</name>
</gene>
<feature type="chain" id="PRO_0000070018" description="P2Y purinoceptor 3">
    <location>
        <begin position="1"/>
        <end position="328"/>
    </location>
</feature>
<feature type="topological domain" description="Extracellular" evidence="1">
    <location>
        <begin position="1"/>
        <end position="22"/>
    </location>
</feature>
<feature type="transmembrane region" description="Helical; Name=1" evidence="1">
    <location>
        <begin position="23"/>
        <end position="43"/>
    </location>
</feature>
<feature type="topological domain" description="Cytoplasmic" evidence="1">
    <location>
        <begin position="44"/>
        <end position="57"/>
    </location>
</feature>
<feature type="transmembrane region" description="Helical; Name=2" evidence="1">
    <location>
        <begin position="58"/>
        <end position="78"/>
    </location>
</feature>
<feature type="topological domain" description="Extracellular" evidence="1">
    <location>
        <begin position="79"/>
        <end position="96"/>
    </location>
</feature>
<feature type="transmembrane region" description="Helical; Name=3" evidence="1">
    <location>
        <begin position="97"/>
        <end position="117"/>
    </location>
</feature>
<feature type="topological domain" description="Cytoplasmic" evidence="1">
    <location>
        <begin position="118"/>
        <end position="139"/>
    </location>
</feature>
<feature type="transmembrane region" description="Helical; Name=4" evidence="1">
    <location>
        <begin position="140"/>
        <end position="160"/>
    </location>
</feature>
<feature type="topological domain" description="Extracellular" evidence="1">
    <location>
        <begin position="161"/>
        <end position="189"/>
    </location>
</feature>
<feature type="transmembrane region" description="Helical; Name=5" evidence="1">
    <location>
        <begin position="190"/>
        <end position="210"/>
    </location>
</feature>
<feature type="topological domain" description="Cytoplasmic" evidence="1">
    <location>
        <begin position="211"/>
        <end position="231"/>
    </location>
</feature>
<feature type="transmembrane region" description="Helical; Name=6" evidence="1">
    <location>
        <begin position="232"/>
        <end position="252"/>
    </location>
</feature>
<feature type="topological domain" description="Extracellular" evidence="1">
    <location>
        <begin position="253"/>
        <end position="275"/>
    </location>
</feature>
<feature type="transmembrane region" description="Helical; Name=7" evidence="1">
    <location>
        <begin position="276"/>
        <end position="298"/>
    </location>
</feature>
<feature type="topological domain" description="Cytoplasmic" evidence="1">
    <location>
        <begin position="299"/>
        <end position="323"/>
    </location>
</feature>
<feature type="glycosylation site" description="N-linked (GlcNAc...) asparagine" evidence="1">
    <location>
        <position position="5"/>
    </location>
</feature>
<feature type="disulfide bond" evidence="2">
    <location>
        <begin position="94"/>
        <end position="172"/>
    </location>
</feature>
<reference key="1">
    <citation type="journal article" date="1998" name="Mol. Pharmacol.">
        <title>Evidence that the p2y3 receptor is the avian homologue of the mammalian P2Y6 receptor.</title>
        <authorList>
            <person name="Li Q."/>
            <person name="Olesky M."/>
            <person name="Palmer R.K."/>
            <person name="Harden T.K."/>
            <person name="Nicholas R.A."/>
        </authorList>
    </citation>
    <scope>NUCLEOTIDE SEQUENCE [GENOMIC DNA]</scope>
</reference>
<dbReference type="EMBL" id="AF069555">
    <property type="protein sequence ID" value="AAC23863.1"/>
    <property type="molecule type" value="Genomic_DNA"/>
</dbReference>
<dbReference type="SMR" id="O93361"/>
<dbReference type="FunCoup" id="O93361">
    <property type="interactions" value="48"/>
</dbReference>
<dbReference type="GlyCosmos" id="O93361">
    <property type="glycosylation" value="1 site, No reported glycans"/>
</dbReference>
<dbReference type="InParanoid" id="O93361"/>
<dbReference type="Proteomes" id="UP000001645">
    <property type="component" value="Unplaced"/>
</dbReference>
<dbReference type="GO" id="GO:0005886">
    <property type="term" value="C:plasma membrane"/>
    <property type="evidence" value="ECO:0007669"/>
    <property type="project" value="UniProtKB-SubCell"/>
</dbReference>
<dbReference type="GO" id="GO:0001621">
    <property type="term" value="F:G protein-coupled ADP receptor activity"/>
    <property type="evidence" value="ECO:0007669"/>
    <property type="project" value="TreeGrafter"/>
</dbReference>
<dbReference type="GO" id="GO:0045029">
    <property type="term" value="F:G protein-coupled UDP receptor activity"/>
    <property type="evidence" value="ECO:0007669"/>
    <property type="project" value="TreeGrafter"/>
</dbReference>
<dbReference type="GO" id="GO:0045030">
    <property type="term" value="F:G protein-coupled UTP receptor activity"/>
    <property type="evidence" value="ECO:0007669"/>
    <property type="project" value="TreeGrafter"/>
</dbReference>
<dbReference type="GO" id="GO:1905835">
    <property type="term" value="P:cellular response to pyrimidine ribonucleotide"/>
    <property type="evidence" value="ECO:0007669"/>
    <property type="project" value="TreeGrafter"/>
</dbReference>
<dbReference type="GO" id="GO:0007200">
    <property type="term" value="P:phospholipase C-activating G protein-coupled receptor signaling pathway"/>
    <property type="evidence" value="ECO:0007669"/>
    <property type="project" value="InterPro"/>
</dbReference>
<dbReference type="CDD" id="cd15379">
    <property type="entry name" value="7tmA_P2Y6"/>
    <property type="match status" value="1"/>
</dbReference>
<dbReference type="FunFam" id="1.20.1070.10:FF:000017">
    <property type="entry name" value="lysophosphatidic acid receptor 4"/>
    <property type="match status" value="1"/>
</dbReference>
<dbReference type="Gene3D" id="1.20.1070.10">
    <property type="entry name" value="Rhodopsin 7-helix transmembrane proteins"/>
    <property type="match status" value="1"/>
</dbReference>
<dbReference type="InterPro" id="IPR000276">
    <property type="entry name" value="GPCR_Rhodpsn"/>
</dbReference>
<dbReference type="InterPro" id="IPR017452">
    <property type="entry name" value="GPCR_Rhodpsn_7TM"/>
</dbReference>
<dbReference type="InterPro" id="IPR000371">
    <property type="entry name" value="P2Y3_rcpt"/>
</dbReference>
<dbReference type="PANTHER" id="PTHR24231:SF16">
    <property type="entry name" value="P2Y PURINOCEPTOR 6"/>
    <property type="match status" value="1"/>
</dbReference>
<dbReference type="PANTHER" id="PTHR24231">
    <property type="entry name" value="PURINOCEPTOR-RELATED G-PROTEIN COUPLED RECEPTOR"/>
    <property type="match status" value="1"/>
</dbReference>
<dbReference type="Pfam" id="PF00001">
    <property type="entry name" value="7tm_1"/>
    <property type="match status" value="1"/>
</dbReference>
<dbReference type="PRINTS" id="PR00237">
    <property type="entry name" value="GPCRRHODOPSN"/>
</dbReference>
<dbReference type="PRINTS" id="PR01065">
    <property type="entry name" value="P2Y3PRNOCPTR"/>
</dbReference>
<dbReference type="PRINTS" id="PR01157">
    <property type="entry name" value="P2YPURNOCPTR"/>
</dbReference>
<dbReference type="SUPFAM" id="SSF81321">
    <property type="entry name" value="Family A G protein-coupled receptor-like"/>
    <property type="match status" value="1"/>
</dbReference>
<dbReference type="PROSITE" id="PS50262">
    <property type="entry name" value="G_PROTEIN_RECEP_F1_2"/>
    <property type="match status" value="1"/>
</dbReference>